<protein>
    <recommendedName>
        <fullName evidence="1">Adenosylcobinamide-GDP ribazoletransferase</fullName>
        <ecNumber evidence="1">2.7.8.26</ecNumber>
    </recommendedName>
    <alternativeName>
        <fullName evidence="1">Cobalamin synthase</fullName>
    </alternativeName>
    <alternativeName>
        <fullName evidence="1">Cobalamin-5'-phosphate synthase</fullName>
    </alternativeName>
</protein>
<gene>
    <name evidence="1" type="primary">cobS</name>
    <name type="ordered locus">Rfer_2610</name>
</gene>
<proteinExistence type="inferred from homology"/>
<organism>
    <name type="scientific">Albidiferax ferrireducens (strain ATCC BAA-621 / DSM 15236 / T118)</name>
    <name type="common">Rhodoferax ferrireducens</name>
    <dbReference type="NCBI Taxonomy" id="338969"/>
    <lineage>
        <taxon>Bacteria</taxon>
        <taxon>Pseudomonadati</taxon>
        <taxon>Pseudomonadota</taxon>
        <taxon>Betaproteobacteria</taxon>
        <taxon>Burkholderiales</taxon>
        <taxon>Comamonadaceae</taxon>
        <taxon>Rhodoferax</taxon>
    </lineage>
</organism>
<reference key="1">
    <citation type="submission" date="2006-02" db="EMBL/GenBank/DDBJ databases">
        <title>Complete sequence of chromosome of Rhodoferax ferrireducens DSM 15236.</title>
        <authorList>
            <person name="Copeland A."/>
            <person name="Lucas S."/>
            <person name="Lapidus A."/>
            <person name="Barry K."/>
            <person name="Detter J.C."/>
            <person name="Glavina del Rio T."/>
            <person name="Hammon N."/>
            <person name="Israni S."/>
            <person name="Pitluck S."/>
            <person name="Brettin T."/>
            <person name="Bruce D."/>
            <person name="Han C."/>
            <person name="Tapia R."/>
            <person name="Gilna P."/>
            <person name="Kiss H."/>
            <person name="Schmutz J."/>
            <person name="Larimer F."/>
            <person name="Land M."/>
            <person name="Kyrpides N."/>
            <person name="Ivanova N."/>
            <person name="Richardson P."/>
        </authorList>
    </citation>
    <scope>NUCLEOTIDE SEQUENCE [LARGE SCALE GENOMIC DNA]</scope>
    <source>
        <strain>ATCC BAA-621 / DSM 15236 / T118</strain>
    </source>
</reference>
<keyword id="KW-0997">Cell inner membrane</keyword>
<keyword id="KW-1003">Cell membrane</keyword>
<keyword id="KW-0169">Cobalamin biosynthesis</keyword>
<keyword id="KW-0460">Magnesium</keyword>
<keyword id="KW-0472">Membrane</keyword>
<keyword id="KW-1185">Reference proteome</keyword>
<keyword id="KW-0808">Transferase</keyword>
<keyword id="KW-0812">Transmembrane</keyword>
<keyword id="KW-1133">Transmembrane helix</keyword>
<name>COBS_ALBFT</name>
<accession>Q21V77</accession>
<feature type="chain" id="PRO_1000083264" description="Adenosylcobinamide-GDP ribazoletransferase">
    <location>
        <begin position="1"/>
        <end position="280"/>
    </location>
</feature>
<feature type="transmembrane region" description="Helical" evidence="1">
    <location>
        <begin position="44"/>
        <end position="64"/>
    </location>
</feature>
<feature type="transmembrane region" description="Helical" evidence="1">
    <location>
        <begin position="69"/>
        <end position="89"/>
    </location>
</feature>
<feature type="transmembrane region" description="Helical" evidence="1">
    <location>
        <begin position="111"/>
        <end position="131"/>
    </location>
</feature>
<feature type="transmembrane region" description="Helical" evidence="1">
    <location>
        <begin position="135"/>
        <end position="155"/>
    </location>
</feature>
<feature type="transmembrane region" description="Helical" evidence="1">
    <location>
        <begin position="189"/>
        <end position="209"/>
    </location>
</feature>
<feature type="transmembrane region" description="Helical" evidence="1">
    <location>
        <begin position="226"/>
        <end position="246"/>
    </location>
</feature>
<dbReference type="EC" id="2.7.8.26" evidence="1"/>
<dbReference type="EMBL" id="CP000267">
    <property type="protein sequence ID" value="ABD70326.1"/>
    <property type="molecule type" value="Genomic_DNA"/>
</dbReference>
<dbReference type="RefSeq" id="WP_011464894.1">
    <property type="nucleotide sequence ID" value="NC_007908.1"/>
</dbReference>
<dbReference type="STRING" id="338969.Rfer_2610"/>
<dbReference type="KEGG" id="rfr:Rfer_2610"/>
<dbReference type="eggNOG" id="COG0368">
    <property type="taxonomic scope" value="Bacteria"/>
</dbReference>
<dbReference type="HOGENOM" id="CLU_057426_1_1_4"/>
<dbReference type="OrthoDB" id="9794626at2"/>
<dbReference type="UniPathway" id="UPA00148">
    <property type="reaction ID" value="UER00238"/>
</dbReference>
<dbReference type="Proteomes" id="UP000008332">
    <property type="component" value="Chromosome"/>
</dbReference>
<dbReference type="GO" id="GO:0005886">
    <property type="term" value="C:plasma membrane"/>
    <property type="evidence" value="ECO:0007669"/>
    <property type="project" value="UniProtKB-SubCell"/>
</dbReference>
<dbReference type="GO" id="GO:0051073">
    <property type="term" value="F:adenosylcobinamide-GDP ribazoletransferase activity"/>
    <property type="evidence" value="ECO:0007669"/>
    <property type="project" value="UniProtKB-UniRule"/>
</dbReference>
<dbReference type="GO" id="GO:0008818">
    <property type="term" value="F:cobalamin 5'-phosphate synthase activity"/>
    <property type="evidence" value="ECO:0007669"/>
    <property type="project" value="UniProtKB-UniRule"/>
</dbReference>
<dbReference type="GO" id="GO:0009236">
    <property type="term" value="P:cobalamin biosynthetic process"/>
    <property type="evidence" value="ECO:0007669"/>
    <property type="project" value="UniProtKB-UniRule"/>
</dbReference>
<dbReference type="HAMAP" id="MF_00719">
    <property type="entry name" value="CobS"/>
    <property type="match status" value="1"/>
</dbReference>
<dbReference type="InterPro" id="IPR003805">
    <property type="entry name" value="CobS"/>
</dbReference>
<dbReference type="PANTHER" id="PTHR34148">
    <property type="entry name" value="ADENOSYLCOBINAMIDE-GDP RIBAZOLETRANSFERASE"/>
    <property type="match status" value="1"/>
</dbReference>
<dbReference type="PANTHER" id="PTHR34148:SF1">
    <property type="entry name" value="ADENOSYLCOBINAMIDE-GDP RIBAZOLETRANSFERASE"/>
    <property type="match status" value="1"/>
</dbReference>
<dbReference type="Pfam" id="PF02654">
    <property type="entry name" value="CobS"/>
    <property type="match status" value="1"/>
</dbReference>
<sequence>MSQFIRHYLLSLQFFTRIPVTGRLANWVGFSPAMLRASAGHFPGVGVLVGALVAAFTALLLFVLPRTGSTPLVAAALGTALGVLLTGAFHEDGLADVFDGLGGSAERERALVIMKDSRVGAFGAIAVMLALLCKVALLALLGAVSATLMVAALFVAHVLSRTWPLLTIRLLPHVGDAAGSKSKPLADQISVAALLTGFIWCFMALALVISTQSATEYIAINLTDTALLQALLSAVVASCVAWAVMARWFWRRLQGFTGDCLGATQQVCELAFYLGLAVGL</sequence>
<evidence type="ECO:0000255" key="1">
    <source>
        <dbReference type="HAMAP-Rule" id="MF_00719"/>
    </source>
</evidence>
<comment type="function">
    <text evidence="1">Joins adenosylcobinamide-GDP and alpha-ribazole to generate adenosylcobalamin (Ado-cobalamin). Also synthesizes adenosylcobalamin 5'-phosphate from adenosylcobinamide-GDP and alpha-ribazole 5'-phosphate.</text>
</comment>
<comment type="catalytic activity">
    <reaction evidence="1">
        <text>alpha-ribazole + adenosylcob(III)inamide-GDP = adenosylcob(III)alamin + GMP + H(+)</text>
        <dbReference type="Rhea" id="RHEA:16049"/>
        <dbReference type="ChEBI" id="CHEBI:10329"/>
        <dbReference type="ChEBI" id="CHEBI:15378"/>
        <dbReference type="ChEBI" id="CHEBI:18408"/>
        <dbReference type="ChEBI" id="CHEBI:58115"/>
        <dbReference type="ChEBI" id="CHEBI:60487"/>
        <dbReference type="EC" id="2.7.8.26"/>
    </reaction>
</comment>
<comment type="catalytic activity">
    <reaction evidence="1">
        <text>alpha-ribazole 5'-phosphate + adenosylcob(III)inamide-GDP = adenosylcob(III)alamin 5'-phosphate + GMP + H(+)</text>
        <dbReference type="Rhea" id="RHEA:23560"/>
        <dbReference type="ChEBI" id="CHEBI:15378"/>
        <dbReference type="ChEBI" id="CHEBI:57918"/>
        <dbReference type="ChEBI" id="CHEBI:58115"/>
        <dbReference type="ChEBI" id="CHEBI:60487"/>
        <dbReference type="ChEBI" id="CHEBI:60493"/>
        <dbReference type="EC" id="2.7.8.26"/>
    </reaction>
</comment>
<comment type="cofactor">
    <cofactor evidence="1">
        <name>Mg(2+)</name>
        <dbReference type="ChEBI" id="CHEBI:18420"/>
    </cofactor>
</comment>
<comment type="pathway">
    <text evidence="1">Cofactor biosynthesis; adenosylcobalamin biosynthesis; adenosylcobalamin from cob(II)yrinate a,c-diamide: step 7/7.</text>
</comment>
<comment type="subcellular location">
    <subcellularLocation>
        <location evidence="1">Cell inner membrane</location>
        <topology evidence="1">Multi-pass membrane protein</topology>
    </subcellularLocation>
</comment>
<comment type="similarity">
    <text evidence="1">Belongs to the CobS family.</text>
</comment>